<name>SMAD2_BOVIN</name>
<evidence type="ECO:0000250" key="1"/>
<evidence type="ECO:0000250" key="2">
    <source>
        <dbReference type="UniProtKB" id="Q15796"/>
    </source>
</evidence>
<evidence type="ECO:0000250" key="3">
    <source>
        <dbReference type="UniProtKB" id="Q62432"/>
    </source>
</evidence>
<evidence type="ECO:0000255" key="4">
    <source>
        <dbReference type="PROSITE-ProRule" id="PRU00438"/>
    </source>
</evidence>
<evidence type="ECO:0000255" key="5">
    <source>
        <dbReference type="PROSITE-ProRule" id="PRU00439"/>
    </source>
</evidence>
<evidence type="ECO:0000256" key="6">
    <source>
        <dbReference type="SAM" id="MobiDB-lite"/>
    </source>
</evidence>
<evidence type="ECO:0000305" key="7"/>
<proteinExistence type="evidence at transcript level"/>
<reference key="1">
    <citation type="submission" date="2006-03" db="EMBL/GenBank/DDBJ databases">
        <title>cDNA cloning of Bos taurus SMAD2 gene.</title>
        <authorList>
            <person name="Zhang L."/>
            <person name="Xu S."/>
            <person name="Gao X."/>
            <person name="Zhang X."/>
        </authorList>
    </citation>
    <scope>NUCLEOTIDE SEQUENCE [MRNA]</scope>
</reference>
<comment type="function">
    <text evidence="2 3">Receptor-regulated SMAD (R-SMAD) that is an intracellular signal transducer and transcriptional modulator activated by TGF-beta (transforming growth factor) and activin type 1 receptor kinases. Binds the TRE element in the promoter region of many genes that are regulated by TGF-beta and, on formation of the SMAD2/SMAD4 complex, activates transcription. Promotes TGFB1-mediated transcription of odontoblastic differentiation genes in dental papilla cells (By similarity). Positively regulates PDPK1 kinase activity by stimulating its dissociation from the 14-3-3 protein YWHAQ which acts as a negative regulator (By similarity).</text>
</comment>
<comment type="subunit">
    <text evidence="2 3">Monomer; in the absence of TGF-beta (By similarity). Heterodimer; in the presence of TGF-beta (By similarity). Forms a heterodimer with co-SMAD, SMAD4, in the nucleus to form the transactivation complex SMAD2/SMAD4 (By similarity). Found in a complex with SMAD3 and TRIM33 upon addition of TGF-beta (By similarity). Identified in a complex that contains at least ZNF451, SMAD2, SMAD3 and SMAD4 (By similarity). Interacts (via the MH2 domain) with ZFYVE9; may form trimers with the SMAD4 co-SMAD (By similarity). Interacts with TAZ/WWRT1 (By similarity). Interacts with FOXH1 (By similarity). Interacts with SNW1 (By similarity). Interacts with CREB-binding protein (CBP) and EP300 (By similarity). Interacts with SNON (By similarity). Interacts with ALK4/ACVR1B (By similarity). Interacts with SKOR1 (By similarity). Interacts with SKOR2 (By similarity). Interacts with PRDM16 (By similarity). Interacts (via MH2 domain) with LEMD3 (By similarity). Interacts with RBPMS (By similarity). Interacts with WWP1. Interacts (dephosphorylated form, via the MH1 and MH2 domains) with RANBP3 (via its C-terminal R domain); the interaction results in the export of dephosphorylated SMAD3 out of the nucleus and termination of the TGF-beta signaling (By similarity). Interacts with PDPK1 (via PH domain) (By similarity). Interacts with DAB2; the interactions are enhanced upon TGF-beta stimulation (By similarity). Interacts with USP15 (By similarity). Interacts with PPP5C (By similarity). Interacts with LDLRAD4 (via the SMAD interaction motif) (By similarity). Interacts (via MH2 domain) with PMEPA1 (via the SMAD interaction motif) (By similarity). Interacts with ZFHX3 (By similarity). Interacts with ZNF451 (By similarity). Interacts with SMURF2 when phosphorylated on Ser-465/467 (By similarity). Interacts with PPM1A (By similarity). Interacts with TGF-beta (By similarity). Interacts with TGFBR1 (By similarity). Interacts with TGIF (By similarity). Interacts with SMAD3 and TRIM33 (By similarity). Interacts with ZNF580 (By similarity). Interacts with NEDD4L in response to TGF-beta (By similarity). Interacts with HGS (By similarity). Interacts with AIP1 (By similarity). Interacts with WWP1 (By similarity). Interacts with PML (By similarity). Interacts weakly with ZNF8 (By similarity). Interacts (when phosphorylated) with RNF111; RNF111 acts as an enhancer of the transcriptional responses by mediating ubiquitination and degradation of SMAD2 inhibitors (By similarity). Interacts with YAP1 (when phosphorylated at 'Ser-55') (By similarity). Interacts when phosphorylated with IPO7; the interaction facilitates translocation of SMAD2 to the nucleus (By similarity). Interacts with MTMR4; negatively regulates TGF-beta signaling through SMAD2 dephosphorylation and retention in endosomes (By similarity).</text>
</comment>
<comment type="subcellular location">
    <subcellularLocation>
        <location evidence="2">Cytoplasm</location>
    </subcellularLocation>
    <subcellularLocation>
        <location evidence="2">Nucleus</location>
    </subcellularLocation>
    <text evidence="2 3">Cytoplasmic and nuclear in the absence of TGF-beta (By similarity). On TGF-beta stimulation, migrates to the nucleus when complexed with SMAD4 or with IPO7 (By similarity). On dephosphorylation by phosphatase PPM1A, released from the SMAD2/SMAD4 complex, and exported out of the nucleus by interaction with RANBP1 (By similarity). Localized mainly to the nucleus in the early stages of embryo development with expression becoming evident in the cytoplasm at the blastocyst and epiblast stages (By similarity).</text>
</comment>
<comment type="PTM">
    <text evidence="2">In response to TGF-beta, phosphorylated on the C-terminal SXS motif by TGF-beta and activin type 1 receptor kinases, phosphorylation declines progressively in a KMT5A-dependent manner. Phosphorylation in this motif is required for interaction with a number of proteins including SMURF2, SNON and SMAD4 in response to TGF-beta. Dephosphorylated in this motif by PPM1A leading to disruption of the SMAD2/3-SMAD4 complex, nuclear export and termination of the TGF-beta signaling. In response to decorin, the naturally occurring inhibitor of TGF-beta signaling, phosphorylated on Ser-240 by CaMK2. Phosphorylated by MAPK3 upon EGF stimulation; which increases transcriptional activity and stability, and is blocked by calmodulin. Phosphorylated by PDPK1 (By similarity).</text>
</comment>
<comment type="PTM">
    <text evidence="2">Acetylated on Lys-19 by coactivators in response to TGF-beta signaling, which increases transcriptional activity.</text>
</comment>
<comment type="PTM">
    <text evidence="2 3">In response to TGF-beta, ubiquitinated by NEDD4L; which promotes its degradation. Monoubiquitinated, leading to prevent DNA-binding (By similarity). Deubiquitination by USP15 alleviates inhibition and promotes activation of TGF-beta target genes (By similarity). Ubiquitinated by RNF111, leading to its degradation: only SMAD2 proteins that are 'in use' are targeted by RNF111, RNF111 playing a key role in activating SMAD2 and regulating its turnover (By similarity).</text>
</comment>
<comment type="similarity">
    <text evidence="7">Belongs to the dwarfin/SMAD family.</text>
</comment>
<sequence>MSSILPFTPPVVKRLLGWKKSAGGSGGAGGGEQNGQEEKWCEKAVKSLVKKLKKTGRLDELEKAITTQNCNTKCVTIPSTCSEIWGLSTPNTIDQWDTTGLYSFSEQTRSLDGRLQVSHRKGLPHVIYCRLWRWPDLHSHHELKAIENCEYAFNLKKDEVCVNPYHYQRVETPVLPPVLVPRHTEILTELPPLDDYTHSIPENTNFPAGIEPQSNYIPETPPPGYISEDGETSDQQLNQSMDTGSPAELSPTTLSPVNHSLDLQPVTYSEPAFWCSIAYYELNQRVGETFHASQPSLTVDGFTDPSNSERFCLGLLSNVNRNATVEMTRRHIGRGVRLYYIGGEVFAECLSDSAIFVQSPNCNQRYGWHPATVCKIPPGCNLKIFNNQGFAALLAQSVNQGFEAVYQLTRMCTIRMSFVKGWGAEYRRQTVTSTPCWIELHLNGPLQWLDKVLTQMGSPSVRCSSMS</sequence>
<keyword id="KW-0007">Acetylation</keyword>
<keyword id="KW-0963">Cytoplasm</keyword>
<keyword id="KW-0238">DNA-binding</keyword>
<keyword id="KW-0479">Metal-binding</keyword>
<keyword id="KW-0539">Nucleus</keyword>
<keyword id="KW-0597">Phosphoprotein</keyword>
<keyword id="KW-1185">Reference proteome</keyword>
<keyword id="KW-0804">Transcription</keyword>
<keyword id="KW-0805">Transcription regulation</keyword>
<keyword id="KW-0832">Ubl conjugation</keyword>
<keyword id="KW-0862">Zinc</keyword>
<gene>
    <name type="primary">SMAD2</name>
</gene>
<dbReference type="EMBL" id="DQ432067">
    <property type="protein sequence ID" value="ABD92771.1"/>
    <property type="molecule type" value="mRNA"/>
</dbReference>
<dbReference type="RefSeq" id="NP_001039683.1">
    <property type="nucleotide sequence ID" value="NM_001046218.1"/>
</dbReference>
<dbReference type="SMR" id="Q1W668"/>
<dbReference type="FunCoup" id="Q1W668">
    <property type="interactions" value="2835"/>
</dbReference>
<dbReference type="STRING" id="9913.ENSBTAP00000017649"/>
<dbReference type="iPTMnet" id="Q1W668"/>
<dbReference type="PaxDb" id="9913-ENSBTAP00000017649"/>
<dbReference type="ABCD" id="Q1W668">
    <property type="antibodies" value="1 sequenced antibody"/>
</dbReference>
<dbReference type="GeneID" id="516010"/>
<dbReference type="KEGG" id="bta:516010"/>
<dbReference type="CTD" id="4087"/>
<dbReference type="eggNOG" id="KOG3701">
    <property type="taxonomic scope" value="Eukaryota"/>
</dbReference>
<dbReference type="InParanoid" id="Q1W668"/>
<dbReference type="OrthoDB" id="5794312at2759"/>
<dbReference type="Proteomes" id="UP000009136">
    <property type="component" value="Unplaced"/>
</dbReference>
<dbReference type="GO" id="GO:0005737">
    <property type="term" value="C:cytoplasm"/>
    <property type="evidence" value="ECO:0000250"/>
    <property type="project" value="UniProtKB"/>
</dbReference>
<dbReference type="GO" id="GO:0071144">
    <property type="term" value="C:heteromeric SMAD protein complex"/>
    <property type="evidence" value="ECO:0000318"/>
    <property type="project" value="GO_Central"/>
</dbReference>
<dbReference type="GO" id="GO:0005634">
    <property type="term" value="C:nucleus"/>
    <property type="evidence" value="ECO:0000250"/>
    <property type="project" value="UniProtKB"/>
</dbReference>
<dbReference type="GO" id="GO:0000981">
    <property type="term" value="F:DNA-binding transcription factor activity, RNA polymerase II-specific"/>
    <property type="evidence" value="ECO:0000318"/>
    <property type="project" value="GO_Central"/>
</dbReference>
<dbReference type="GO" id="GO:0070411">
    <property type="term" value="F:I-SMAD binding"/>
    <property type="evidence" value="ECO:0000318"/>
    <property type="project" value="GO_Central"/>
</dbReference>
<dbReference type="GO" id="GO:0046872">
    <property type="term" value="F:metal ion binding"/>
    <property type="evidence" value="ECO:0007669"/>
    <property type="project" value="UniProtKB-KW"/>
</dbReference>
<dbReference type="GO" id="GO:0000978">
    <property type="term" value="F:RNA polymerase II cis-regulatory region sequence-specific DNA binding"/>
    <property type="evidence" value="ECO:0000318"/>
    <property type="project" value="GO_Central"/>
</dbReference>
<dbReference type="GO" id="GO:0032924">
    <property type="term" value="P:activin receptor signaling pathway"/>
    <property type="evidence" value="ECO:0000318"/>
    <property type="project" value="GO_Central"/>
</dbReference>
<dbReference type="GO" id="GO:0009653">
    <property type="term" value="P:anatomical structure morphogenesis"/>
    <property type="evidence" value="ECO:0000318"/>
    <property type="project" value="GO_Central"/>
</dbReference>
<dbReference type="GO" id="GO:0030154">
    <property type="term" value="P:cell differentiation"/>
    <property type="evidence" value="ECO:0000318"/>
    <property type="project" value="GO_Central"/>
</dbReference>
<dbReference type="GO" id="GO:0071895">
    <property type="term" value="P:odontoblast differentiation"/>
    <property type="evidence" value="ECO:0000250"/>
    <property type="project" value="UniProtKB"/>
</dbReference>
<dbReference type="GO" id="GO:0045944">
    <property type="term" value="P:positive regulation of transcription by RNA polymerase II"/>
    <property type="evidence" value="ECO:0000318"/>
    <property type="project" value="GO_Central"/>
</dbReference>
<dbReference type="GO" id="GO:0060395">
    <property type="term" value="P:SMAD protein signal transduction"/>
    <property type="evidence" value="ECO:0000318"/>
    <property type="project" value="GO_Central"/>
</dbReference>
<dbReference type="GO" id="GO:0007179">
    <property type="term" value="P:transforming growth factor beta receptor signaling pathway"/>
    <property type="evidence" value="ECO:0000318"/>
    <property type="project" value="GO_Central"/>
</dbReference>
<dbReference type="CDD" id="cd10491">
    <property type="entry name" value="MH1_SMAD_2_3"/>
    <property type="match status" value="1"/>
</dbReference>
<dbReference type="CDD" id="cd10985">
    <property type="entry name" value="MH2_SMAD_2_3"/>
    <property type="match status" value="1"/>
</dbReference>
<dbReference type="FunFam" id="2.60.200.10:FF:000001">
    <property type="entry name" value="Mothers against decapentaplegic homolog"/>
    <property type="match status" value="1"/>
</dbReference>
<dbReference type="FunFam" id="3.90.520.10:FF:000007">
    <property type="entry name" value="Mothers against decapentaplegic homolog"/>
    <property type="match status" value="1"/>
</dbReference>
<dbReference type="Gene3D" id="2.60.200.10">
    <property type="match status" value="1"/>
</dbReference>
<dbReference type="Gene3D" id="3.90.520.10">
    <property type="entry name" value="SMAD MH1 domain"/>
    <property type="match status" value="1"/>
</dbReference>
<dbReference type="InterPro" id="IPR013790">
    <property type="entry name" value="Dwarfin"/>
</dbReference>
<dbReference type="InterPro" id="IPR003619">
    <property type="entry name" value="MAD_homology1_Dwarfin-type"/>
</dbReference>
<dbReference type="InterPro" id="IPR013019">
    <property type="entry name" value="MAD_homology_MH1"/>
</dbReference>
<dbReference type="InterPro" id="IPR017855">
    <property type="entry name" value="SMAD-like_dom_sf"/>
</dbReference>
<dbReference type="InterPro" id="IPR001132">
    <property type="entry name" value="SMAD_dom_Dwarfin-type"/>
</dbReference>
<dbReference type="InterPro" id="IPR008984">
    <property type="entry name" value="SMAD_FHA_dom_sf"/>
</dbReference>
<dbReference type="InterPro" id="IPR036578">
    <property type="entry name" value="SMAD_MH1_sf"/>
</dbReference>
<dbReference type="PANTHER" id="PTHR13703:SF42">
    <property type="entry name" value="MOTHERS AGAINST DECAPENTAPLEGIC HOMOLOG 2"/>
    <property type="match status" value="1"/>
</dbReference>
<dbReference type="PANTHER" id="PTHR13703">
    <property type="entry name" value="SMAD"/>
    <property type="match status" value="1"/>
</dbReference>
<dbReference type="Pfam" id="PF03165">
    <property type="entry name" value="MH1"/>
    <property type="match status" value="1"/>
</dbReference>
<dbReference type="Pfam" id="PF03166">
    <property type="entry name" value="MH2"/>
    <property type="match status" value="1"/>
</dbReference>
<dbReference type="SMART" id="SM00523">
    <property type="entry name" value="DWA"/>
    <property type="match status" value="1"/>
</dbReference>
<dbReference type="SMART" id="SM00524">
    <property type="entry name" value="DWB"/>
    <property type="match status" value="1"/>
</dbReference>
<dbReference type="SUPFAM" id="SSF56366">
    <property type="entry name" value="SMAD MH1 domain"/>
    <property type="match status" value="1"/>
</dbReference>
<dbReference type="SUPFAM" id="SSF49879">
    <property type="entry name" value="SMAD/FHA domain"/>
    <property type="match status" value="1"/>
</dbReference>
<dbReference type="PROSITE" id="PS51075">
    <property type="entry name" value="MH1"/>
    <property type="match status" value="1"/>
</dbReference>
<dbReference type="PROSITE" id="PS51076">
    <property type="entry name" value="MH2"/>
    <property type="match status" value="1"/>
</dbReference>
<accession>Q1W668</accession>
<organism>
    <name type="scientific">Bos taurus</name>
    <name type="common">Bovine</name>
    <dbReference type="NCBI Taxonomy" id="9913"/>
    <lineage>
        <taxon>Eukaryota</taxon>
        <taxon>Metazoa</taxon>
        <taxon>Chordata</taxon>
        <taxon>Craniata</taxon>
        <taxon>Vertebrata</taxon>
        <taxon>Euteleostomi</taxon>
        <taxon>Mammalia</taxon>
        <taxon>Eutheria</taxon>
        <taxon>Laurasiatheria</taxon>
        <taxon>Artiodactyla</taxon>
        <taxon>Ruminantia</taxon>
        <taxon>Pecora</taxon>
        <taxon>Bovidae</taxon>
        <taxon>Bovinae</taxon>
        <taxon>Bos</taxon>
    </lineage>
</organism>
<feature type="initiator methionine" description="Removed" evidence="2">
    <location>
        <position position="1"/>
    </location>
</feature>
<feature type="chain" id="PRO_0000236241" description="Mothers against decapentaplegic homolog 2">
    <location>
        <begin position="2"/>
        <end position="467"/>
    </location>
</feature>
<feature type="domain" description="MH1" evidence="4">
    <location>
        <begin position="10"/>
        <end position="176"/>
    </location>
</feature>
<feature type="domain" description="MH2" evidence="5">
    <location>
        <begin position="274"/>
        <end position="467"/>
    </location>
</feature>
<feature type="region of interest" description="Disordered" evidence="6">
    <location>
        <begin position="207"/>
        <end position="251"/>
    </location>
</feature>
<feature type="short sequence motif" description="PY-motif" evidence="1">
    <location>
        <begin position="221"/>
        <end position="225"/>
    </location>
</feature>
<feature type="compositionally biased region" description="Polar residues" evidence="6">
    <location>
        <begin position="207"/>
        <end position="217"/>
    </location>
</feature>
<feature type="compositionally biased region" description="Polar residues" evidence="6">
    <location>
        <begin position="233"/>
        <end position="243"/>
    </location>
</feature>
<feature type="binding site" evidence="1">
    <location>
        <position position="74"/>
    </location>
    <ligand>
        <name>Zn(2+)</name>
        <dbReference type="ChEBI" id="CHEBI:29105"/>
    </ligand>
</feature>
<feature type="binding site" evidence="1">
    <location>
        <position position="149"/>
    </location>
    <ligand>
        <name>Zn(2+)</name>
        <dbReference type="ChEBI" id="CHEBI:29105"/>
    </ligand>
</feature>
<feature type="binding site" evidence="1">
    <location>
        <position position="161"/>
    </location>
    <ligand>
        <name>Zn(2+)</name>
        <dbReference type="ChEBI" id="CHEBI:29105"/>
    </ligand>
</feature>
<feature type="binding site" evidence="1">
    <location>
        <position position="166"/>
    </location>
    <ligand>
        <name>Zn(2+)</name>
        <dbReference type="ChEBI" id="CHEBI:29105"/>
    </ligand>
</feature>
<feature type="modified residue" description="N-acetylserine" evidence="2">
    <location>
        <position position="2"/>
    </location>
</feature>
<feature type="modified residue" description="Phosphothreonine" evidence="2">
    <location>
        <position position="8"/>
    </location>
</feature>
<feature type="modified residue" description="N6-acetyllysine" evidence="2">
    <location>
        <position position="19"/>
    </location>
</feature>
<feature type="modified residue" description="Phosphothreonine" evidence="2">
    <location>
        <position position="220"/>
    </location>
</feature>
<feature type="modified residue" description="Phosphoserine; by CAMK2" evidence="2 5">
    <location>
        <position position="240"/>
    </location>
</feature>
<feature type="modified residue" description="Phosphoserine" evidence="2">
    <location>
        <position position="245"/>
    </location>
</feature>
<feature type="modified residue" description="Phosphoserine" evidence="2">
    <location>
        <position position="250"/>
    </location>
</feature>
<feature type="modified residue" description="Phosphoserine" evidence="2">
    <location>
        <position position="255"/>
    </location>
</feature>
<feature type="modified residue" description="Phosphoserine" evidence="2 5">
    <location>
        <position position="458"/>
    </location>
</feature>
<feature type="modified residue" description="Phosphoserine" evidence="2 5">
    <location>
        <position position="460"/>
    </location>
</feature>
<feature type="modified residue" description="Phosphoserine" evidence="2 5">
    <location>
        <position position="464"/>
    </location>
</feature>
<feature type="modified residue" description="Phosphoserine; by TGFBR1" evidence="2 5">
    <location>
        <position position="465"/>
    </location>
</feature>
<feature type="modified residue" description="Phosphoserine; by TGFBR1" evidence="2 5">
    <location>
        <position position="467"/>
    </location>
</feature>
<protein>
    <recommendedName>
        <fullName>Mothers against decapentaplegic homolog 2</fullName>
        <shortName>MAD homolog 2</shortName>
        <shortName>Mothers against DPP homolog 2</shortName>
    </recommendedName>
    <alternativeName>
        <fullName>SMAD family member 2</fullName>
        <shortName>SMAD 2</shortName>
        <shortName>Smad2</shortName>
    </alternativeName>
</protein>